<gene>
    <name evidence="1" type="primary">dapE</name>
    <name type="ordered locus">Aave_2482</name>
</gene>
<feature type="chain" id="PRO_0000375440" description="Succinyl-diaminopimelate desuccinylase">
    <location>
        <begin position="1"/>
        <end position="389"/>
    </location>
</feature>
<feature type="active site" evidence="1">
    <location>
        <position position="77"/>
    </location>
</feature>
<feature type="active site" description="Proton acceptor" evidence="1">
    <location>
        <position position="142"/>
    </location>
</feature>
<feature type="binding site" evidence="1">
    <location>
        <position position="75"/>
    </location>
    <ligand>
        <name>Zn(2+)</name>
        <dbReference type="ChEBI" id="CHEBI:29105"/>
        <label>1</label>
    </ligand>
</feature>
<feature type="binding site" evidence="1">
    <location>
        <position position="108"/>
    </location>
    <ligand>
        <name>Zn(2+)</name>
        <dbReference type="ChEBI" id="CHEBI:29105"/>
        <label>1</label>
    </ligand>
</feature>
<feature type="binding site" evidence="1">
    <location>
        <position position="108"/>
    </location>
    <ligand>
        <name>Zn(2+)</name>
        <dbReference type="ChEBI" id="CHEBI:29105"/>
        <label>2</label>
    </ligand>
</feature>
<feature type="binding site" evidence="1">
    <location>
        <position position="143"/>
    </location>
    <ligand>
        <name>Zn(2+)</name>
        <dbReference type="ChEBI" id="CHEBI:29105"/>
        <label>2</label>
    </ligand>
</feature>
<feature type="binding site" evidence="1">
    <location>
        <position position="171"/>
    </location>
    <ligand>
        <name>Zn(2+)</name>
        <dbReference type="ChEBI" id="CHEBI:29105"/>
        <label>1</label>
    </ligand>
</feature>
<feature type="binding site" evidence="1">
    <location>
        <position position="357"/>
    </location>
    <ligand>
        <name>Zn(2+)</name>
        <dbReference type="ChEBI" id="CHEBI:29105"/>
        <label>2</label>
    </ligand>
</feature>
<reference key="1">
    <citation type="submission" date="2006-12" db="EMBL/GenBank/DDBJ databases">
        <title>Complete sequence of Acidovorax avenae subsp. citrulli AAC00-1.</title>
        <authorList>
            <person name="Copeland A."/>
            <person name="Lucas S."/>
            <person name="Lapidus A."/>
            <person name="Barry K."/>
            <person name="Detter J.C."/>
            <person name="Glavina del Rio T."/>
            <person name="Dalin E."/>
            <person name="Tice H."/>
            <person name="Pitluck S."/>
            <person name="Kiss H."/>
            <person name="Brettin T."/>
            <person name="Bruce D."/>
            <person name="Han C."/>
            <person name="Tapia R."/>
            <person name="Gilna P."/>
            <person name="Schmutz J."/>
            <person name="Larimer F."/>
            <person name="Land M."/>
            <person name="Hauser L."/>
            <person name="Kyrpides N."/>
            <person name="Kim E."/>
            <person name="Stahl D."/>
            <person name="Richardson P."/>
        </authorList>
    </citation>
    <scope>NUCLEOTIDE SEQUENCE [LARGE SCALE GENOMIC DNA]</scope>
    <source>
        <strain>AAC00-1</strain>
    </source>
</reference>
<sequence length="389" mass="41631">MSRTLILAEQLISRPSVTPEDAGCLELLAGRLAPLGFTCERMDSGPDSFRVSNLWARRAAAGGGAPARTLVFAGHTDVVPTGPPEQWSSPPFTPSHRDGRLYGRGASDMKTSIAAFVVAVEEFLAATPEPAIALAFLLTSDEEGPSVDGTKVVVEQLAARGETLDWCIVGEPTSVRKTGDMIKNGRRGTLSGKLTVRGIQGHIAYPQLARNPIHQALPALAELAATEWDRGNDFFPPTSWQISNIHGGTGATNVIPGTVVVDFNFRFCTESTAEGLKTRVHNLLDRHGLEYDLTWTLGGQPFLTTPGELVAAVQQAITDETGITTELSTTGGTSDGRFIARVCPQVIELGPPNATIHKIDEHVVIADVEPLKNIYRRTLERLNAQAAAA</sequence>
<accession>A1TQ19</accession>
<name>DAPE_PARC0</name>
<comment type="function">
    <text evidence="1">Catalyzes the hydrolysis of N-succinyl-L,L-diaminopimelic acid (SDAP), forming succinate and LL-2,6-diaminopimelate (DAP), an intermediate involved in the bacterial biosynthesis of lysine and meso-diaminopimelic acid, an essential component of bacterial cell walls.</text>
</comment>
<comment type="catalytic activity">
    <reaction evidence="1">
        <text>N-succinyl-(2S,6S)-2,6-diaminopimelate + H2O = (2S,6S)-2,6-diaminopimelate + succinate</text>
        <dbReference type="Rhea" id="RHEA:22608"/>
        <dbReference type="ChEBI" id="CHEBI:15377"/>
        <dbReference type="ChEBI" id="CHEBI:30031"/>
        <dbReference type="ChEBI" id="CHEBI:57609"/>
        <dbReference type="ChEBI" id="CHEBI:58087"/>
        <dbReference type="EC" id="3.5.1.18"/>
    </reaction>
</comment>
<comment type="cofactor">
    <cofactor evidence="1">
        <name>Zn(2+)</name>
        <dbReference type="ChEBI" id="CHEBI:29105"/>
    </cofactor>
    <cofactor evidence="1">
        <name>Co(2+)</name>
        <dbReference type="ChEBI" id="CHEBI:48828"/>
    </cofactor>
    <text evidence="1">Binds 2 Zn(2+) or Co(2+) ions per subunit.</text>
</comment>
<comment type="pathway">
    <text evidence="1">Amino-acid biosynthesis; L-lysine biosynthesis via DAP pathway; LL-2,6-diaminopimelate from (S)-tetrahydrodipicolinate (succinylase route): step 3/3.</text>
</comment>
<comment type="subunit">
    <text evidence="1">Homodimer.</text>
</comment>
<comment type="similarity">
    <text evidence="1">Belongs to the peptidase M20A family. DapE subfamily.</text>
</comment>
<organism>
    <name type="scientific">Paracidovorax citrulli (strain AAC00-1)</name>
    <name type="common">Acidovorax citrulli</name>
    <dbReference type="NCBI Taxonomy" id="397945"/>
    <lineage>
        <taxon>Bacteria</taxon>
        <taxon>Pseudomonadati</taxon>
        <taxon>Pseudomonadota</taxon>
        <taxon>Betaproteobacteria</taxon>
        <taxon>Burkholderiales</taxon>
        <taxon>Comamonadaceae</taxon>
        <taxon>Paracidovorax</taxon>
    </lineage>
</organism>
<dbReference type="EC" id="3.5.1.18" evidence="1"/>
<dbReference type="EMBL" id="CP000512">
    <property type="protein sequence ID" value="ABM33057.1"/>
    <property type="molecule type" value="Genomic_DNA"/>
</dbReference>
<dbReference type="RefSeq" id="WP_011795586.1">
    <property type="nucleotide sequence ID" value="NC_008752.1"/>
</dbReference>
<dbReference type="SMR" id="A1TQ19"/>
<dbReference type="STRING" id="397945.Aave_2482"/>
<dbReference type="GeneID" id="79792058"/>
<dbReference type="KEGG" id="aav:Aave_2482"/>
<dbReference type="eggNOG" id="COG0624">
    <property type="taxonomic scope" value="Bacteria"/>
</dbReference>
<dbReference type="HOGENOM" id="CLU_021802_4_0_4"/>
<dbReference type="OrthoDB" id="9809784at2"/>
<dbReference type="UniPathway" id="UPA00034">
    <property type="reaction ID" value="UER00021"/>
</dbReference>
<dbReference type="Proteomes" id="UP000002596">
    <property type="component" value="Chromosome"/>
</dbReference>
<dbReference type="GO" id="GO:0008777">
    <property type="term" value="F:acetylornithine deacetylase activity"/>
    <property type="evidence" value="ECO:0007669"/>
    <property type="project" value="TreeGrafter"/>
</dbReference>
<dbReference type="GO" id="GO:0050897">
    <property type="term" value="F:cobalt ion binding"/>
    <property type="evidence" value="ECO:0007669"/>
    <property type="project" value="UniProtKB-UniRule"/>
</dbReference>
<dbReference type="GO" id="GO:0009014">
    <property type="term" value="F:succinyl-diaminopimelate desuccinylase activity"/>
    <property type="evidence" value="ECO:0007669"/>
    <property type="project" value="UniProtKB-UniRule"/>
</dbReference>
<dbReference type="GO" id="GO:0008270">
    <property type="term" value="F:zinc ion binding"/>
    <property type="evidence" value="ECO:0007669"/>
    <property type="project" value="UniProtKB-UniRule"/>
</dbReference>
<dbReference type="GO" id="GO:0019877">
    <property type="term" value="P:diaminopimelate biosynthetic process"/>
    <property type="evidence" value="ECO:0007669"/>
    <property type="project" value="UniProtKB-UniRule"/>
</dbReference>
<dbReference type="GO" id="GO:0006526">
    <property type="term" value="P:L-arginine biosynthetic process"/>
    <property type="evidence" value="ECO:0007669"/>
    <property type="project" value="TreeGrafter"/>
</dbReference>
<dbReference type="GO" id="GO:0009089">
    <property type="term" value="P:lysine biosynthetic process via diaminopimelate"/>
    <property type="evidence" value="ECO:0007669"/>
    <property type="project" value="UniProtKB-UniRule"/>
</dbReference>
<dbReference type="CDD" id="cd03891">
    <property type="entry name" value="M20_DapE_proteobac"/>
    <property type="match status" value="1"/>
</dbReference>
<dbReference type="FunFam" id="3.30.70.360:FF:000011">
    <property type="entry name" value="Succinyl-diaminopimelate desuccinylase"/>
    <property type="match status" value="1"/>
</dbReference>
<dbReference type="Gene3D" id="3.40.630.10">
    <property type="entry name" value="Zn peptidases"/>
    <property type="match status" value="2"/>
</dbReference>
<dbReference type="HAMAP" id="MF_01690">
    <property type="entry name" value="DapE"/>
    <property type="match status" value="1"/>
</dbReference>
<dbReference type="InterPro" id="IPR036264">
    <property type="entry name" value="Bact_exopeptidase_dim_dom"/>
</dbReference>
<dbReference type="InterPro" id="IPR005941">
    <property type="entry name" value="DapE_proteobac"/>
</dbReference>
<dbReference type="InterPro" id="IPR002933">
    <property type="entry name" value="Peptidase_M20"/>
</dbReference>
<dbReference type="InterPro" id="IPR011650">
    <property type="entry name" value="Peptidase_M20_dimer"/>
</dbReference>
<dbReference type="InterPro" id="IPR050072">
    <property type="entry name" value="Peptidase_M20A"/>
</dbReference>
<dbReference type="NCBIfam" id="TIGR01246">
    <property type="entry name" value="dapE_proteo"/>
    <property type="match status" value="1"/>
</dbReference>
<dbReference type="NCBIfam" id="NF009557">
    <property type="entry name" value="PRK13009.1"/>
    <property type="match status" value="1"/>
</dbReference>
<dbReference type="PANTHER" id="PTHR43808">
    <property type="entry name" value="ACETYLORNITHINE DEACETYLASE"/>
    <property type="match status" value="1"/>
</dbReference>
<dbReference type="PANTHER" id="PTHR43808:SF31">
    <property type="entry name" value="N-ACETYL-L-CITRULLINE DEACETYLASE"/>
    <property type="match status" value="1"/>
</dbReference>
<dbReference type="Pfam" id="PF07687">
    <property type="entry name" value="M20_dimer"/>
    <property type="match status" value="1"/>
</dbReference>
<dbReference type="Pfam" id="PF01546">
    <property type="entry name" value="Peptidase_M20"/>
    <property type="match status" value="1"/>
</dbReference>
<dbReference type="SUPFAM" id="SSF55031">
    <property type="entry name" value="Bacterial exopeptidase dimerisation domain"/>
    <property type="match status" value="1"/>
</dbReference>
<dbReference type="SUPFAM" id="SSF53187">
    <property type="entry name" value="Zn-dependent exopeptidases"/>
    <property type="match status" value="1"/>
</dbReference>
<proteinExistence type="inferred from homology"/>
<evidence type="ECO:0000255" key="1">
    <source>
        <dbReference type="HAMAP-Rule" id="MF_01690"/>
    </source>
</evidence>
<keyword id="KW-0028">Amino-acid biosynthesis</keyword>
<keyword id="KW-0170">Cobalt</keyword>
<keyword id="KW-0220">Diaminopimelate biosynthesis</keyword>
<keyword id="KW-0378">Hydrolase</keyword>
<keyword id="KW-0457">Lysine biosynthesis</keyword>
<keyword id="KW-0479">Metal-binding</keyword>
<keyword id="KW-0862">Zinc</keyword>
<protein>
    <recommendedName>
        <fullName evidence="1">Succinyl-diaminopimelate desuccinylase</fullName>
        <shortName evidence="1">SDAP desuccinylase</shortName>
        <ecNumber evidence="1">3.5.1.18</ecNumber>
    </recommendedName>
    <alternativeName>
        <fullName evidence="1">N-succinyl-LL-2,6-diaminoheptanedioate amidohydrolase</fullName>
    </alternativeName>
</protein>